<dbReference type="EMBL" id="BX571857">
    <property type="protein sequence ID" value="CAG43645.1"/>
    <property type="molecule type" value="Genomic_DNA"/>
</dbReference>
<dbReference type="RefSeq" id="WP_000323164.1">
    <property type="nucleotide sequence ID" value="NC_002953.3"/>
</dbReference>
<dbReference type="SMR" id="Q6G816"/>
<dbReference type="KEGG" id="sas:SAS1840"/>
<dbReference type="HOGENOM" id="CLU_005170_0_0_9"/>
<dbReference type="GO" id="GO:0005886">
    <property type="term" value="C:plasma membrane"/>
    <property type="evidence" value="ECO:0007669"/>
    <property type="project" value="UniProtKB-SubCell"/>
</dbReference>
<dbReference type="GO" id="GO:0008514">
    <property type="term" value="F:organic anion transmembrane transporter activity"/>
    <property type="evidence" value="ECO:0007669"/>
    <property type="project" value="UniProtKB-ARBA"/>
</dbReference>
<dbReference type="GO" id="GO:0015293">
    <property type="term" value="F:symporter activity"/>
    <property type="evidence" value="ECO:0007669"/>
    <property type="project" value="UniProtKB-KW"/>
</dbReference>
<dbReference type="GO" id="GO:1905039">
    <property type="term" value="P:carboxylic acid transmembrane transport"/>
    <property type="evidence" value="ECO:0007669"/>
    <property type="project" value="UniProtKB-ARBA"/>
</dbReference>
<dbReference type="GO" id="GO:0006814">
    <property type="term" value="P:sodium ion transport"/>
    <property type="evidence" value="ECO:0007669"/>
    <property type="project" value="UniProtKB-KW"/>
</dbReference>
<dbReference type="CDD" id="cd01115">
    <property type="entry name" value="SLC13_permease"/>
    <property type="match status" value="1"/>
</dbReference>
<dbReference type="InterPro" id="IPR001898">
    <property type="entry name" value="SLC13A/DASS"/>
</dbReference>
<dbReference type="NCBIfam" id="TIGR00785">
    <property type="entry name" value="dass"/>
    <property type="match status" value="1"/>
</dbReference>
<dbReference type="PANTHER" id="PTHR10283">
    <property type="entry name" value="SOLUTE CARRIER FAMILY 13 MEMBER"/>
    <property type="match status" value="1"/>
</dbReference>
<dbReference type="PANTHER" id="PTHR10283:SF82">
    <property type="entry name" value="SOLUTE CARRIER FAMILY 13 MEMBER 2"/>
    <property type="match status" value="1"/>
</dbReference>
<dbReference type="Pfam" id="PF00939">
    <property type="entry name" value="Na_sulph_symp"/>
    <property type="match status" value="1"/>
</dbReference>
<protein>
    <recommendedName>
        <fullName>Sodium-dependent dicarboxylate transporter SdcS</fullName>
    </recommendedName>
    <alternativeName>
        <fullName>Na(+)/dicarboxylate symporter</fullName>
    </alternativeName>
</protein>
<keyword id="KW-1003">Cell membrane</keyword>
<keyword id="KW-0406">Ion transport</keyword>
<keyword id="KW-0472">Membrane</keyword>
<keyword id="KW-0915">Sodium</keyword>
<keyword id="KW-0739">Sodium transport</keyword>
<keyword id="KW-0769">Symport</keyword>
<keyword id="KW-0812">Transmembrane</keyword>
<keyword id="KW-1133">Transmembrane helix</keyword>
<keyword id="KW-0813">Transport</keyword>
<gene>
    <name type="primary">sdcS</name>
    <name type="ordered locus">SAS1840</name>
</gene>
<accession>Q6G816</accession>
<name>SDCS_STAAS</name>
<organism>
    <name type="scientific">Staphylococcus aureus (strain MSSA476)</name>
    <dbReference type="NCBI Taxonomy" id="282459"/>
    <lineage>
        <taxon>Bacteria</taxon>
        <taxon>Bacillati</taxon>
        <taxon>Bacillota</taxon>
        <taxon>Bacilli</taxon>
        <taxon>Bacillales</taxon>
        <taxon>Staphylococcaceae</taxon>
        <taxon>Staphylococcus</taxon>
    </lineage>
</organism>
<feature type="chain" id="PRO_0000260094" description="Sodium-dependent dicarboxylate transporter SdcS">
    <location>
        <begin position="1"/>
        <end position="520"/>
    </location>
</feature>
<feature type="transmembrane region" description="Helical" evidence="2">
    <location>
        <begin position="30"/>
        <end position="50"/>
    </location>
</feature>
<feature type="transmembrane region" description="Helical" evidence="2">
    <location>
        <begin position="55"/>
        <end position="75"/>
    </location>
</feature>
<feature type="transmembrane region" description="Helical" evidence="2">
    <location>
        <begin position="77"/>
        <end position="97"/>
    </location>
</feature>
<feature type="transmembrane region" description="Helical" evidence="2">
    <location>
        <begin position="104"/>
        <end position="124"/>
    </location>
</feature>
<feature type="transmembrane region" description="Helical" evidence="2">
    <location>
        <begin position="160"/>
        <end position="180"/>
    </location>
</feature>
<feature type="transmembrane region" description="Helical" evidence="2">
    <location>
        <begin position="207"/>
        <end position="227"/>
    </location>
</feature>
<feature type="transmembrane region" description="Helical" evidence="2">
    <location>
        <begin position="242"/>
        <end position="262"/>
    </location>
</feature>
<feature type="transmembrane region" description="Helical" evidence="2">
    <location>
        <begin position="298"/>
        <end position="318"/>
    </location>
</feature>
<feature type="transmembrane region" description="Helical" evidence="2">
    <location>
        <begin position="323"/>
        <end position="343"/>
    </location>
</feature>
<feature type="transmembrane region" description="Helical" evidence="2">
    <location>
        <begin position="362"/>
        <end position="382"/>
    </location>
</feature>
<feature type="transmembrane region" description="Helical" evidence="2">
    <location>
        <begin position="399"/>
        <end position="419"/>
    </location>
</feature>
<feature type="transmembrane region" description="Helical" evidence="2">
    <location>
        <begin position="428"/>
        <end position="448"/>
    </location>
</feature>
<feature type="transmembrane region" description="Helical" evidence="2">
    <location>
        <begin position="452"/>
        <end position="472"/>
    </location>
</feature>
<feature type="transmembrane region" description="Helical" evidence="2">
    <location>
        <begin position="491"/>
        <end position="511"/>
    </location>
</feature>
<comment type="function">
    <text evidence="1">Mediates the transport of the dicarboxylates fumarate, malate, and succinate across the cytoplasmic membrane via a Na(+)-electrochemical gradient.</text>
</comment>
<comment type="subcellular location">
    <subcellularLocation>
        <location evidence="3">Cell membrane</location>
        <topology evidence="3">Multi-pass membrane protein</topology>
    </subcellularLocation>
</comment>
<comment type="similarity">
    <text evidence="3">Belongs to the SLC13A/DASS transporter (TC 2.A.47) family. NADC subfamily.</text>
</comment>
<sequence>MAYFNQHQSMISKRYLTFFSKSKKKKPFSAGQLIGLILGPLLFLLTLLFFHPQDLPWKGVYVLAITLWIATWWITEAIPIAATSLLPIVLLPLGHILTPEQVSSEYGNDIIFLFLGGFILAIAMERWNLHTRVALTIINLIGASTSKILLGFMVATGFLSMFVSNTAAVMIMIPIGLAIIKEAHDLQEANTNQTSIQKFEKSLVLAIGYAGTIGGLGTLIGTPPLIILKGQYMQHFGHEISFAKWMIVGIPTVIVLLGITWLYLRYVAFRHDLKYLPGGQTLIKQKLDELGKMKYEEKVVQTIFVLASLLWITREFLLKKWEVTSSVADGTIAIFISILLFVIPAKNTEKHRRIIDWEVAKELPWGVLILFGGGLALAKGISESGLAKWLGEQLKSLNGVSPILIVIVITIFVLFLTEVTSNTATATMILPILATLSVAVGVHPLLLMAPAAMAANCAYMLPVGTPPNAIIFGSGKISIKQMASVGFWVNLISAIIIILVVYYVMPIVLGIDINQPLPLK</sequence>
<reference key="1">
    <citation type="journal article" date="2004" name="Proc. Natl. Acad. Sci. U.S.A.">
        <title>Complete genomes of two clinical Staphylococcus aureus strains: evidence for the rapid evolution of virulence and drug resistance.</title>
        <authorList>
            <person name="Holden M.T.G."/>
            <person name="Feil E.J."/>
            <person name="Lindsay J.A."/>
            <person name="Peacock S.J."/>
            <person name="Day N.P.J."/>
            <person name="Enright M.C."/>
            <person name="Foster T.J."/>
            <person name="Moore C.E."/>
            <person name="Hurst L."/>
            <person name="Atkin R."/>
            <person name="Barron A."/>
            <person name="Bason N."/>
            <person name="Bentley S.D."/>
            <person name="Chillingworth C."/>
            <person name="Chillingworth T."/>
            <person name="Churcher C."/>
            <person name="Clark L."/>
            <person name="Corton C."/>
            <person name="Cronin A."/>
            <person name="Doggett J."/>
            <person name="Dowd L."/>
            <person name="Feltwell T."/>
            <person name="Hance Z."/>
            <person name="Harris B."/>
            <person name="Hauser H."/>
            <person name="Holroyd S."/>
            <person name="Jagels K."/>
            <person name="James K.D."/>
            <person name="Lennard N."/>
            <person name="Line A."/>
            <person name="Mayes R."/>
            <person name="Moule S."/>
            <person name="Mungall K."/>
            <person name="Ormond D."/>
            <person name="Quail M.A."/>
            <person name="Rabbinowitsch E."/>
            <person name="Rutherford K.M."/>
            <person name="Sanders M."/>
            <person name="Sharp S."/>
            <person name="Simmonds M."/>
            <person name="Stevens K."/>
            <person name="Whitehead S."/>
            <person name="Barrell B.G."/>
            <person name="Spratt B.G."/>
            <person name="Parkhill J."/>
        </authorList>
    </citation>
    <scope>NUCLEOTIDE SEQUENCE [LARGE SCALE GENOMIC DNA]</scope>
    <source>
        <strain>MSSA476</strain>
    </source>
</reference>
<evidence type="ECO:0000250" key="1"/>
<evidence type="ECO:0000255" key="2"/>
<evidence type="ECO:0000305" key="3"/>
<proteinExistence type="inferred from homology"/>